<feature type="chain" id="PRO_0000065025" description="Uba3-binding protein but1">
    <location>
        <begin position="1"/>
        <end position="243"/>
    </location>
</feature>
<feature type="region of interest" description="Disordered" evidence="1">
    <location>
        <begin position="28"/>
        <end position="50"/>
    </location>
</feature>
<dbReference type="EMBL" id="BR000027">
    <property type="protein sequence ID" value="FAA00001.1"/>
    <property type="molecule type" value="Genomic_DNA"/>
</dbReference>
<dbReference type="EMBL" id="DQ104735">
    <property type="protein sequence ID" value="AAZ16240.1"/>
    <property type="status" value="ALT_INIT"/>
    <property type="molecule type" value="Genomic_DNA"/>
</dbReference>
<dbReference type="EMBL" id="CU329670">
    <property type="protein sequence ID" value="CAF02013.1"/>
    <property type="molecule type" value="Genomic_DNA"/>
</dbReference>
<dbReference type="PIR" id="T38445">
    <property type="entry name" value="T38445"/>
</dbReference>
<dbReference type="RefSeq" id="NP_001018283.1">
    <property type="nucleotide sequence ID" value="NM_001020046.2"/>
</dbReference>
<dbReference type="SMR" id="O42666"/>
<dbReference type="BioGRID" id="280479">
    <property type="interactions" value="22"/>
</dbReference>
<dbReference type="STRING" id="284812.O42666"/>
<dbReference type="PaxDb" id="4896-SPAC27D7.12c.1"/>
<dbReference type="EnsemblFungi" id="SPAC27D7.12c.1">
    <property type="protein sequence ID" value="SPAC27D7.12c.1:pep"/>
    <property type="gene ID" value="SPAC27D7.12c"/>
</dbReference>
<dbReference type="GeneID" id="3361403"/>
<dbReference type="KEGG" id="spo:3361403"/>
<dbReference type="PomBase" id="SPAC27D7.12c">
    <property type="gene designation" value="but1"/>
</dbReference>
<dbReference type="VEuPathDB" id="FungiDB:SPAC27D7.12c"/>
<dbReference type="eggNOG" id="KOG0852">
    <property type="taxonomic scope" value="Eukaryota"/>
</dbReference>
<dbReference type="HOGENOM" id="CLU_1176008_0_0_1"/>
<dbReference type="InParanoid" id="O42666"/>
<dbReference type="PRO" id="PR:O42666"/>
<dbReference type="Proteomes" id="UP000002485">
    <property type="component" value="Chromosome I"/>
</dbReference>
<dbReference type="GO" id="GO:0005829">
    <property type="term" value="C:cytosol"/>
    <property type="evidence" value="ECO:0007005"/>
    <property type="project" value="PomBase"/>
</dbReference>
<dbReference type="GO" id="GO:0005634">
    <property type="term" value="C:nucleus"/>
    <property type="evidence" value="ECO:0000314"/>
    <property type="project" value="PomBase"/>
</dbReference>
<dbReference type="GO" id="GO:0008379">
    <property type="term" value="F:thioredoxin peroxidase activity"/>
    <property type="evidence" value="ECO:0000315"/>
    <property type="project" value="PomBase"/>
</dbReference>
<dbReference type="GO" id="GO:0061692">
    <property type="term" value="P:cellular detoxification of hydrogen peroxide"/>
    <property type="evidence" value="ECO:0000315"/>
    <property type="project" value="PomBase"/>
</dbReference>
<dbReference type="GO" id="GO:0042744">
    <property type="term" value="P:hydrogen peroxide catabolic process"/>
    <property type="evidence" value="ECO:0000315"/>
    <property type="project" value="PomBase"/>
</dbReference>
<dbReference type="GO" id="GO:0051321">
    <property type="term" value="P:meiotic cell cycle"/>
    <property type="evidence" value="ECO:0007669"/>
    <property type="project" value="UniProtKB-KW"/>
</dbReference>
<dbReference type="Gene3D" id="3.40.30.10">
    <property type="entry name" value="Glutaredoxin"/>
    <property type="match status" value="1"/>
</dbReference>
<dbReference type="InterPro" id="IPR000866">
    <property type="entry name" value="AhpC/TSA"/>
</dbReference>
<dbReference type="InterPro" id="IPR036249">
    <property type="entry name" value="Thioredoxin-like_sf"/>
</dbReference>
<dbReference type="Pfam" id="PF00578">
    <property type="entry name" value="AhpC-TSA"/>
    <property type="match status" value="1"/>
</dbReference>
<dbReference type="SUPFAM" id="SSF52833">
    <property type="entry name" value="Thioredoxin-like"/>
    <property type="match status" value="1"/>
</dbReference>
<name>BUT1_SCHPO</name>
<evidence type="ECO:0000256" key="1">
    <source>
        <dbReference type="SAM" id="MobiDB-lite"/>
    </source>
</evidence>
<evidence type="ECO:0000269" key="2">
    <source>
    </source>
</evidence>
<evidence type="ECO:0000269" key="3">
    <source>
    </source>
</evidence>
<evidence type="ECO:0000269" key="4">
    <source>
    </source>
</evidence>
<evidence type="ECO:0000305" key="5"/>
<keyword id="KW-0469">Meiosis</keyword>
<keyword id="KW-0539">Nucleus</keyword>
<keyword id="KW-1185">Reference proteome</keyword>
<keyword id="KW-0833">Ubl conjugation pathway</keyword>
<sequence length="243" mass="27418">MEIDQNLFQFPISTRDAVHEKNCTLRVKSTKKRRSSTKDEETRGMHPHIKSSFRNGMNHARVIREEDMEVVFEPCFINLSKPVYVVNGIGGINEIHKLPILFSSFVLCFFGNVSGDYGYVDNVPLHISVISHFYPCLQSYNTDVIGITTDTVENICQWKAHLPRALQFSLPVISDSNNEICREMGMLHPLGGAKLALDAIVIIDSIGRRRDILPIRTTTCVSTLITAVQETVRFLAIENGRLL</sequence>
<reference key="1">
    <citation type="journal article" date="2003" name="Biochem. Biophys. Res. Commun.">
        <title>But1 and But2 proteins bind to Uba3, a catalytic subunit of E1 for neddylation, in fission yeast.</title>
        <authorList>
            <person name="Yashiroda H."/>
            <person name="Tanaka K."/>
        </authorList>
    </citation>
    <scope>NUCLEOTIDE SEQUENCE [GENOMIC DNA]</scope>
    <scope>FUNCTION</scope>
    <scope>INTERACTION WITH BUT2 AND UBA3</scope>
    <scope>SUBCELLULAR LOCATION</scope>
</reference>
<reference key="2">
    <citation type="submission" date="2005-06" db="EMBL/GenBank/DDBJ databases">
        <title>Cloning and characterization of a peroxiredoxin (Prx) gene from Schizosaccharomyces pombe.</title>
        <authorList>
            <person name="Kang K.-Y."/>
            <person name="Lim H.-W."/>
            <person name="Lim C.-J."/>
        </authorList>
    </citation>
    <scope>NUCLEOTIDE SEQUENCE [GENOMIC DNA]</scope>
</reference>
<reference key="3">
    <citation type="journal article" date="2002" name="Nature">
        <title>The genome sequence of Schizosaccharomyces pombe.</title>
        <authorList>
            <person name="Wood V."/>
            <person name="Gwilliam R."/>
            <person name="Rajandream M.A."/>
            <person name="Lyne M.H."/>
            <person name="Lyne R."/>
            <person name="Stewart A."/>
            <person name="Sgouros J.G."/>
            <person name="Peat N."/>
            <person name="Hayles J."/>
            <person name="Baker S.G."/>
            <person name="Basham D."/>
            <person name="Bowman S."/>
            <person name="Brooks K."/>
            <person name="Brown D."/>
            <person name="Brown S."/>
            <person name="Chillingworth T."/>
            <person name="Churcher C.M."/>
            <person name="Collins M."/>
            <person name="Connor R."/>
            <person name="Cronin A."/>
            <person name="Davis P."/>
            <person name="Feltwell T."/>
            <person name="Fraser A."/>
            <person name="Gentles S."/>
            <person name="Goble A."/>
            <person name="Hamlin N."/>
            <person name="Harris D.E."/>
            <person name="Hidalgo J."/>
            <person name="Hodgson G."/>
            <person name="Holroyd S."/>
            <person name="Hornsby T."/>
            <person name="Howarth S."/>
            <person name="Huckle E.J."/>
            <person name="Hunt S."/>
            <person name="Jagels K."/>
            <person name="James K.D."/>
            <person name="Jones L."/>
            <person name="Jones M."/>
            <person name="Leather S."/>
            <person name="McDonald S."/>
            <person name="McLean J."/>
            <person name="Mooney P."/>
            <person name="Moule S."/>
            <person name="Mungall K.L."/>
            <person name="Murphy L.D."/>
            <person name="Niblett D."/>
            <person name="Odell C."/>
            <person name="Oliver K."/>
            <person name="O'Neil S."/>
            <person name="Pearson D."/>
            <person name="Quail M.A."/>
            <person name="Rabbinowitsch E."/>
            <person name="Rutherford K.M."/>
            <person name="Rutter S."/>
            <person name="Saunders D."/>
            <person name="Seeger K."/>
            <person name="Sharp S."/>
            <person name="Skelton J."/>
            <person name="Simmonds M.N."/>
            <person name="Squares R."/>
            <person name="Squares S."/>
            <person name="Stevens K."/>
            <person name="Taylor K."/>
            <person name="Taylor R.G."/>
            <person name="Tivey A."/>
            <person name="Walsh S.V."/>
            <person name="Warren T."/>
            <person name="Whitehead S."/>
            <person name="Woodward J.R."/>
            <person name="Volckaert G."/>
            <person name="Aert R."/>
            <person name="Robben J."/>
            <person name="Grymonprez B."/>
            <person name="Weltjens I."/>
            <person name="Vanstreels E."/>
            <person name="Rieger M."/>
            <person name="Schaefer M."/>
            <person name="Mueller-Auer S."/>
            <person name="Gabel C."/>
            <person name="Fuchs M."/>
            <person name="Duesterhoeft A."/>
            <person name="Fritzc C."/>
            <person name="Holzer E."/>
            <person name="Moestl D."/>
            <person name="Hilbert H."/>
            <person name="Borzym K."/>
            <person name="Langer I."/>
            <person name="Beck A."/>
            <person name="Lehrach H."/>
            <person name="Reinhardt R."/>
            <person name="Pohl T.M."/>
            <person name="Eger P."/>
            <person name="Zimmermann W."/>
            <person name="Wedler H."/>
            <person name="Wambutt R."/>
            <person name="Purnelle B."/>
            <person name="Goffeau A."/>
            <person name="Cadieu E."/>
            <person name="Dreano S."/>
            <person name="Gloux S."/>
            <person name="Lelaure V."/>
            <person name="Mottier S."/>
            <person name="Galibert F."/>
            <person name="Aves S.J."/>
            <person name="Xiang Z."/>
            <person name="Hunt C."/>
            <person name="Moore K."/>
            <person name="Hurst S.M."/>
            <person name="Lucas M."/>
            <person name="Rochet M."/>
            <person name="Gaillardin C."/>
            <person name="Tallada V.A."/>
            <person name="Garzon A."/>
            <person name="Thode G."/>
            <person name="Daga R.R."/>
            <person name="Cruzado L."/>
            <person name="Jimenez J."/>
            <person name="Sanchez M."/>
            <person name="del Rey F."/>
            <person name="Benito J."/>
            <person name="Dominguez A."/>
            <person name="Revuelta J.L."/>
            <person name="Moreno S."/>
            <person name="Armstrong J."/>
            <person name="Forsburg S.L."/>
            <person name="Cerutti L."/>
            <person name="Lowe T."/>
            <person name="McCombie W.R."/>
            <person name="Paulsen I."/>
            <person name="Potashkin J."/>
            <person name="Shpakovski G.V."/>
            <person name="Ussery D."/>
            <person name="Barrell B.G."/>
            <person name="Nurse P."/>
        </authorList>
    </citation>
    <scope>NUCLEOTIDE SEQUENCE [LARGE SCALE GENOMIC DNA]</scope>
    <source>
        <strain>972 / ATCC 24843</strain>
    </source>
</reference>
<reference key="4">
    <citation type="journal article" date="2005" name="Curr. Biol.">
        <title>A large-scale screen in S. pombe identifies seven novel genes required for critical meiotic events.</title>
        <authorList>
            <person name="Martin-Castellanos C."/>
            <person name="Blanco M."/>
            <person name="Rozalen A.E."/>
            <person name="Perez-Hidalgo L."/>
            <person name="Garcia A.I."/>
            <person name="Conde F."/>
            <person name="Mata J."/>
            <person name="Ellermeier C."/>
            <person name="Davis L."/>
            <person name="San-Segundo P."/>
            <person name="Smith G.R."/>
            <person name="Moreno S."/>
        </authorList>
    </citation>
    <scope>FUNCTION IN MEIOSIS</scope>
</reference>
<reference key="5">
    <citation type="journal article" date="2006" name="Nat. Biotechnol.">
        <title>ORFeome cloning and global analysis of protein localization in the fission yeast Schizosaccharomyces pombe.</title>
        <authorList>
            <person name="Matsuyama A."/>
            <person name="Arai R."/>
            <person name="Yashiroda Y."/>
            <person name="Shirai A."/>
            <person name="Kamata A."/>
            <person name="Sekido S."/>
            <person name="Kobayashi Y."/>
            <person name="Hashimoto A."/>
            <person name="Hamamoto M."/>
            <person name="Hiraoka Y."/>
            <person name="Horinouchi S."/>
            <person name="Yoshida M."/>
        </authorList>
    </citation>
    <scope>SUBCELLULAR LOCATION [LARGE SCALE ANALYSIS]</scope>
</reference>
<accession>O42666</accession>
<accession>Q4F7X3</accession>
<gene>
    <name type="primary">but1</name>
    <name type="synonym">mug107</name>
    <name type="ORF">SPAC27D7.12c</name>
</gene>
<protein>
    <recommendedName>
        <fullName>Uba3-binding protein but1</fullName>
    </recommendedName>
    <alternativeName>
        <fullName>Meiotically up-regulated gene 107 protein</fullName>
    </alternativeName>
</protein>
<comment type="function">
    <text evidence="2 3">Acts as a negative regulator of the NEDD8 pathway. Has a role in meiosis.</text>
</comment>
<comment type="subunit">
    <text evidence="2">Homodimer. Interacts with but2 and uba3.</text>
</comment>
<comment type="subcellular location">
    <subcellularLocation>
        <location evidence="2 4">Nucleus</location>
    </subcellularLocation>
</comment>
<comment type="sequence caution" evidence="5">
    <conflict type="erroneous initiation">
        <sequence resource="EMBL-CDS" id="AAZ16240"/>
    </conflict>
</comment>
<organism>
    <name type="scientific">Schizosaccharomyces pombe (strain 972 / ATCC 24843)</name>
    <name type="common">Fission yeast</name>
    <dbReference type="NCBI Taxonomy" id="284812"/>
    <lineage>
        <taxon>Eukaryota</taxon>
        <taxon>Fungi</taxon>
        <taxon>Dikarya</taxon>
        <taxon>Ascomycota</taxon>
        <taxon>Taphrinomycotina</taxon>
        <taxon>Schizosaccharomycetes</taxon>
        <taxon>Schizosaccharomycetales</taxon>
        <taxon>Schizosaccharomycetaceae</taxon>
        <taxon>Schizosaccharomyces</taxon>
    </lineage>
</organism>
<proteinExistence type="evidence at protein level"/>